<protein>
    <recommendedName>
        <fullName>Ribose operon repressor</fullName>
    </recommendedName>
</protein>
<comment type="function">
    <text evidence="1">Transcriptional repressor for the ribose rbsDACBK operon. RbsR binds to a region of perfect dyad symmetry spanning the rbs operon transcriptional start site. The affinity for the rbs operator is reduced by addition of ribose, consistent with ribose being the inducer of the operon (By similarity).</text>
</comment>
<comment type="sequence caution" evidence="3">
    <conflict type="erroneous initiation">
        <sequence resource="EMBL-CDS" id="AAN45274"/>
    </conflict>
    <text>Truncated N-terminus.</text>
</comment>
<comment type="sequence caution" evidence="3">
    <conflict type="erroneous initiation">
        <sequence resource="EMBL-CDS" id="AAP18923"/>
    </conflict>
    <text>Truncated N-terminus.</text>
</comment>
<accession>P0ACQ3</accession>
<accession>P25551</accession>
<feature type="initiator methionine" description="Removed" evidence="1">
    <location>
        <position position="1"/>
    </location>
</feature>
<feature type="chain" id="PRO_0000107988" description="Ribose operon repressor">
    <location>
        <begin position="2"/>
        <end position="330"/>
    </location>
</feature>
<feature type="domain" description="HTH lacI-type" evidence="2">
    <location>
        <begin position="2"/>
        <end position="56"/>
    </location>
</feature>
<feature type="DNA-binding region" description="H-T-H motif" evidence="2">
    <location>
        <begin position="4"/>
        <end position="23"/>
    </location>
</feature>
<sequence length="330" mass="36612">MATMKDVARLAGVSTSTVSHVINKDRFVSEAITAKVEAAIKELNYAPSALARSLKLNQTHTIGMLITASTNPFYSELVRGVERSCFERGYSLVLCNTEGDEQRMNRNLETLMQKRVDGLLLLCTETHQPSREIMQRYPTVPTVMMDWAPFDGDSDLIQDNSLLGGDLATQYLIDKGHTRIACITGPLDKTPARLRLEGYRAAMKRAGLNIPDGYEVTGDFEFNGGFDAMRQLLSHPLRPQAVFTGNDAMAVGVYQALYQAELQVPQDIAVIGYDDIELASFMTPPLTTIHQPKDELGELAIDVLIHRITQPTLQQQRLQLTPILMERGSA</sequence>
<keyword id="KW-0238">DNA-binding</keyword>
<keyword id="KW-1185">Reference proteome</keyword>
<keyword id="KW-0678">Repressor</keyword>
<keyword id="KW-0804">Transcription</keyword>
<keyword id="KW-0805">Transcription regulation</keyword>
<name>RBSR_SHIFL</name>
<reference key="1">
    <citation type="journal article" date="2002" name="Nucleic Acids Res.">
        <title>Genome sequence of Shigella flexneri 2a: insights into pathogenicity through comparison with genomes of Escherichia coli K12 and O157.</title>
        <authorList>
            <person name="Jin Q."/>
            <person name="Yuan Z."/>
            <person name="Xu J."/>
            <person name="Wang Y."/>
            <person name="Shen Y."/>
            <person name="Lu W."/>
            <person name="Wang J."/>
            <person name="Liu H."/>
            <person name="Yang J."/>
            <person name="Yang F."/>
            <person name="Zhang X."/>
            <person name="Zhang J."/>
            <person name="Yang G."/>
            <person name="Wu H."/>
            <person name="Qu D."/>
            <person name="Dong J."/>
            <person name="Sun L."/>
            <person name="Xue Y."/>
            <person name="Zhao A."/>
            <person name="Gao Y."/>
            <person name="Zhu J."/>
            <person name="Kan B."/>
            <person name="Ding K."/>
            <person name="Chen S."/>
            <person name="Cheng H."/>
            <person name="Yao Z."/>
            <person name="He B."/>
            <person name="Chen R."/>
            <person name="Ma D."/>
            <person name="Qiang B."/>
            <person name="Wen Y."/>
            <person name="Hou Y."/>
            <person name="Yu J."/>
        </authorList>
    </citation>
    <scope>NUCLEOTIDE SEQUENCE [LARGE SCALE GENOMIC DNA]</scope>
    <source>
        <strain>301 / Serotype 2a</strain>
    </source>
</reference>
<reference key="2">
    <citation type="journal article" date="2003" name="Infect. Immun.">
        <title>Complete genome sequence and comparative genomics of Shigella flexneri serotype 2a strain 2457T.</title>
        <authorList>
            <person name="Wei J."/>
            <person name="Goldberg M.B."/>
            <person name="Burland V."/>
            <person name="Venkatesan M.M."/>
            <person name="Deng W."/>
            <person name="Fournier G."/>
            <person name="Mayhew G.F."/>
            <person name="Plunkett G. III"/>
            <person name="Rose D.J."/>
            <person name="Darling A."/>
            <person name="Mau B."/>
            <person name="Perna N.T."/>
            <person name="Payne S.M."/>
            <person name="Runyen-Janecky L.J."/>
            <person name="Zhou S."/>
            <person name="Schwartz D.C."/>
            <person name="Blattner F.R."/>
        </authorList>
    </citation>
    <scope>NUCLEOTIDE SEQUENCE [LARGE SCALE GENOMIC DNA]</scope>
    <source>
        <strain>ATCC 700930 / 2457T / Serotype 2a</strain>
    </source>
</reference>
<dbReference type="EMBL" id="AE005674">
    <property type="protein sequence ID" value="AAN45274.2"/>
    <property type="status" value="ALT_INIT"/>
    <property type="molecule type" value="Genomic_DNA"/>
</dbReference>
<dbReference type="EMBL" id="AE014073">
    <property type="protein sequence ID" value="AAP18923.1"/>
    <property type="status" value="ALT_INIT"/>
    <property type="molecule type" value="Genomic_DNA"/>
</dbReference>
<dbReference type="RefSeq" id="NP_709567.2">
    <property type="nucleotide sequence ID" value="NC_004337.2"/>
</dbReference>
<dbReference type="RefSeq" id="WP_000224470.1">
    <property type="nucleotide sequence ID" value="NZ_WPGW01000156.1"/>
</dbReference>
<dbReference type="SMR" id="P0ACQ3"/>
<dbReference type="STRING" id="198214.SF3836"/>
<dbReference type="PaxDb" id="198214-SF3836"/>
<dbReference type="GeneID" id="1026019"/>
<dbReference type="GeneID" id="75173987"/>
<dbReference type="KEGG" id="sfl:SF3836"/>
<dbReference type="KEGG" id="sfx:S3931"/>
<dbReference type="PATRIC" id="fig|198214.7.peg.4527"/>
<dbReference type="HOGENOM" id="CLU_037628_6_2_6"/>
<dbReference type="Proteomes" id="UP000001006">
    <property type="component" value="Chromosome"/>
</dbReference>
<dbReference type="Proteomes" id="UP000002673">
    <property type="component" value="Chromosome"/>
</dbReference>
<dbReference type="GO" id="GO:0003700">
    <property type="term" value="F:DNA-binding transcription factor activity"/>
    <property type="evidence" value="ECO:0007669"/>
    <property type="project" value="TreeGrafter"/>
</dbReference>
<dbReference type="GO" id="GO:0000976">
    <property type="term" value="F:transcription cis-regulatory region binding"/>
    <property type="evidence" value="ECO:0007669"/>
    <property type="project" value="TreeGrafter"/>
</dbReference>
<dbReference type="CDD" id="cd01392">
    <property type="entry name" value="HTH_LacI"/>
    <property type="match status" value="1"/>
</dbReference>
<dbReference type="CDD" id="cd06275">
    <property type="entry name" value="PBP1_PurR"/>
    <property type="match status" value="1"/>
</dbReference>
<dbReference type="FunFam" id="1.10.260.40:FF:000002">
    <property type="entry name" value="HTH-type transcriptional repressor PurR"/>
    <property type="match status" value="1"/>
</dbReference>
<dbReference type="Gene3D" id="3.40.50.2300">
    <property type="match status" value="2"/>
</dbReference>
<dbReference type="Gene3D" id="1.10.260.40">
    <property type="entry name" value="lambda repressor-like DNA-binding domains"/>
    <property type="match status" value="1"/>
</dbReference>
<dbReference type="InterPro" id="IPR000843">
    <property type="entry name" value="HTH_LacI"/>
</dbReference>
<dbReference type="InterPro" id="IPR046335">
    <property type="entry name" value="LacI/GalR-like_sensor"/>
</dbReference>
<dbReference type="InterPro" id="IPR010982">
    <property type="entry name" value="Lambda_DNA-bd_dom_sf"/>
</dbReference>
<dbReference type="InterPro" id="IPR028082">
    <property type="entry name" value="Peripla_BP_I"/>
</dbReference>
<dbReference type="NCBIfam" id="NF007743">
    <property type="entry name" value="PRK10423.1"/>
    <property type="match status" value="1"/>
</dbReference>
<dbReference type="PANTHER" id="PTHR30146">
    <property type="entry name" value="LACI-RELATED TRANSCRIPTIONAL REPRESSOR"/>
    <property type="match status" value="1"/>
</dbReference>
<dbReference type="PANTHER" id="PTHR30146:SF145">
    <property type="entry name" value="RIBOSE OPERON REPRESSOR"/>
    <property type="match status" value="1"/>
</dbReference>
<dbReference type="Pfam" id="PF00356">
    <property type="entry name" value="LacI"/>
    <property type="match status" value="1"/>
</dbReference>
<dbReference type="Pfam" id="PF13377">
    <property type="entry name" value="Peripla_BP_3"/>
    <property type="match status" value="1"/>
</dbReference>
<dbReference type="PRINTS" id="PR00036">
    <property type="entry name" value="HTHLACI"/>
</dbReference>
<dbReference type="SMART" id="SM00354">
    <property type="entry name" value="HTH_LACI"/>
    <property type="match status" value="1"/>
</dbReference>
<dbReference type="SUPFAM" id="SSF47413">
    <property type="entry name" value="lambda repressor-like DNA-binding domains"/>
    <property type="match status" value="1"/>
</dbReference>
<dbReference type="SUPFAM" id="SSF53822">
    <property type="entry name" value="Periplasmic binding protein-like I"/>
    <property type="match status" value="1"/>
</dbReference>
<dbReference type="PROSITE" id="PS00356">
    <property type="entry name" value="HTH_LACI_1"/>
    <property type="match status" value="1"/>
</dbReference>
<dbReference type="PROSITE" id="PS50932">
    <property type="entry name" value="HTH_LACI_2"/>
    <property type="match status" value="1"/>
</dbReference>
<gene>
    <name type="primary">rbsR</name>
    <name type="ordered locus">SF3836</name>
    <name type="ordered locus">S3931</name>
</gene>
<organism>
    <name type="scientific">Shigella flexneri</name>
    <dbReference type="NCBI Taxonomy" id="623"/>
    <lineage>
        <taxon>Bacteria</taxon>
        <taxon>Pseudomonadati</taxon>
        <taxon>Pseudomonadota</taxon>
        <taxon>Gammaproteobacteria</taxon>
        <taxon>Enterobacterales</taxon>
        <taxon>Enterobacteriaceae</taxon>
        <taxon>Shigella</taxon>
    </lineage>
</organism>
<evidence type="ECO:0000250" key="1"/>
<evidence type="ECO:0000255" key="2">
    <source>
        <dbReference type="PROSITE-ProRule" id="PRU00111"/>
    </source>
</evidence>
<evidence type="ECO:0000305" key="3"/>
<proteinExistence type="inferred from homology"/>